<dbReference type="EC" id="2.1.1.67" evidence="1"/>
<dbReference type="EMBL" id="CP000789">
    <property type="protein sequence ID" value="ABU71079.1"/>
    <property type="molecule type" value="Genomic_DNA"/>
</dbReference>
<dbReference type="RefSeq" id="WP_005533410.1">
    <property type="nucleotide sequence ID" value="NC_009783.1"/>
</dbReference>
<dbReference type="SMR" id="A7MVH9"/>
<dbReference type="KEGG" id="vha:VIBHAR_02114"/>
<dbReference type="PATRIC" id="fig|338187.25.peg.577"/>
<dbReference type="Proteomes" id="UP000008152">
    <property type="component" value="Chromosome I"/>
</dbReference>
<dbReference type="GO" id="GO:0005737">
    <property type="term" value="C:cytoplasm"/>
    <property type="evidence" value="ECO:0007669"/>
    <property type="project" value="UniProtKB-SubCell"/>
</dbReference>
<dbReference type="GO" id="GO:0008119">
    <property type="term" value="F:thiopurine S-methyltransferase activity"/>
    <property type="evidence" value="ECO:0007669"/>
    <property type="project" value="UniProtKB-UniRule"/>
</dbReference>
<dbReference type="GO" id="GO:0032259">
    <property type="term" value="P:methylation"/>
    <property type="evidence" value="ECO:0007669"/>
    <property type="project" value="UniProtKB-KW"/>
</dbReference>
<dbReference type="GO" id="GO:0010038">
    <property type="term" value="P:response to metal ion"/>
    <property type="evidence" value="ECO:0007669"/>
    <property type="project" value="InterPro"/>
</dbReference>
<dbReference type="FunFam" id="3.40.50.150:FF:000101">
    <property type="entry name" value="Thiopurine S-methyltransferase"/>
    <property type="match status" value="1"/>
</dbReference>
<dbReference type="Gene3D" id="3.40.50.150">
    <property type="entry name" value="Vaccinia Virus protein VP39"/>
    <property type="match status" value="1"/>
</dbReference>
<dbReference type="HAMAP" id="MF_00812">
    <property type="entry name" value="Thiopur_methtran"/>
    <property type="match status" value="1"/>
</dbReference>
<dbReference type="InterPro" id="IPR029063">
    <property type="entry name" value="SAM-dependent_MTases_sf"/>
</dbReference>
<dbReference type="InterPro" id="IPR022474">
    <property type="entry name" value="Thiopur_S-MeTfrase_Se/Te_detox"/>
</dbReference>
<dbReference type="InterPro" id="IPR025835">
    <property type="entry name" value="Thiopurine_S-MeTrfase"/>
</dbReference>
<dbReference type="InterPro" id="IPR008854">
    <property type="entry name" value="TPMT"/>
</dbReference>
<dbReference type="NCBIfam" id="NF009732">
    <property type="entry name" value="PRK13255.1"/>
    <property type="match status" value="1"/>
</dbReference>
<dbReference type="NCBIfam" id="TIGR03840">
    <property type="entry name" value="TMPT_Se_Te"/>
    <property type="match status" value="1"/>
</dbReference>
<dbReference type="PANTHER" id="PTHR10259">
    <property type="entry name" value="THIOPURINE S-METHYLTRANSFERASE"/>
    <property type="match status" value="1"/>
</dbReference>
<dbReference type="PANTHER" id="PTHR10259:SF11">
    <property type="entry name" value="THIOPURINE S-METHYLTRANSFERASE"/>
    <property type="match status" value="1"/>
</dbReference>
<dbReference type="Pfam" id="PF05724">
    <property type="entry name" value="TPMT"/>
    <property type="match status" value="1"/>
</dbReference>
<dbReference type="PIRSF" id="PIRSF023956">
    <property type="entry name" value="Thiopurine_S-methyltransferase"/>
    <property type="match status" value="1"/>
</dbReference>
<dbReference type="SUPFAM" id="SSF53335">
    <property type="entry name" value="S-adenosyl-L-methionine-dependent methyltransferases"/>
    <property type="match status" value="1"/>
</dbReference>
<dbReference type="PROSITE" id="PS51585">
    <property type="entry name" value="SAM_MT_TPMT"/>
    <property type="match status" value="1"/>
</dbReference>
<evidence type="ECO:0000255" key="1">
    <source>
        <dbReference type="HAMAP-Rule" id="MF_00812"/>
    </source>
</evidence>
<feature type="chain" id="PRO_1000047227" description="Thiopurine S-methyltransferase">
    <location>
        <begin position="1"/>
        <end position="216"/>
    </location>
</feature>
<feature type="binding site" evidence="1">
    <location>
        <position position="11"/>
    </location>
    <ligand>
        <name>S-adenosyl-L-methionine</name>
        <dbReference type="ChEBI" id="CHEBI:59789"/>
    </ligand>
</feature>
<feature type="binding site" evidence="1">
    <location>
        <position position="46"/>
    </location>
    <ligand>
        <name>S-adenosyl-L-methionine</name>
        <dbReference type="ChEBI" id="CHEBI:59789"/>
    </ligand>
</feature>
<feature type="binding site" evidence="1">
    <location>
        <position position="67"/>
    </location>
    <ligand>
        <name>S-adenosyl-L-methionine</name>
        <dbReference type="ChEBI" id="CHEBI:59789"/>
    </ligand>
</feature>
<feature type="binding site" evidence="1">
    <location>
        <position position="122"/>
    </location>
    <ligand>
        <name>S-adenosyl-L-methionine</name>
        <dbReference type="ChEBI" id="CHEBI:59789"/>
    </ligand>
</feature>
<accession>A7MVH9</accession>
<organism>
    <name type="scientific">Vibrio campbellii (strain ATCC BAA-1116)</name>
    <dbReference type="NCBI Taxonomy" id="2902295"/>
    <lineage>
        <taxon>Bacteria</taxon>
        <taxon>Pseudomonadati</taxon>
        <taxon>Pseudomonadota</taxon>
        <taxon>Gammaproteobacteria</taxon>
        <taxon>Vibrionales</taxon>
        <taxon>Vibrionaceae</taxon>
        <taxon>Vibrio</taxon>
    </lineage>
</organism>
<name>TPMT_VIBC1</name>
<gene>
    <name evidence="1" type="primary">tpm</name>
    <name type="ordered locus">VIBHAR_02114</name>
</gene>
<proteinExistence type="inferred from homology"/>
<protein>
    <recommendedName>
        <fullName evidence="1">Thiopurine S-methyltransferase</fullName>
        <ecNumber evidence="1">2.1.1.67</ecNumber>
    </recommendedName>
    <alternativeName>
        <fullName evidence="1">Thiopurine methyltransferase</fullName>
    </alternativeName>
</protein>
<comment type="catalytic activity">
    <reaction evidence="1">
        <text>S-adenosyl-L-methionine + a thiopurine = S-adenosyl-L-homocysteine + a thiopurine S-methylether.</text>
        <dbReference type="EC" id="2.1.1.67"/>
    </reaction>
</comment>
<comment type="subcellular location">
    <subcellularLocation>
        <location evidence="1">Cytoplasm</location>
    </subcellularLocation>
</comment>
<comment type="similarity">
    <text evidence="1">Belongs to the class I-like SAM-binding methyltransferase superfamily. TPMT family.</text>
</comment>
<sequence length="216" mass="24825">MRDQEFWHNKWASNQIGFHLDDVNPLLPAFWQYTNPKREDTVLVPLCGKSEDLIWLATKHDEVQGVELSLIAVRAFFAEHFYTPTVTPVNGMHELYQFDELSIYTGDFFTAPVSKADIIYDRAALVALPKEMREEYANRVKQLLNPGGRILLVTLNYPQDEMSGPPFSVPVEEIEQLFEGYKVTCLNVDQADENHPKIAKKGLSRFSEEVYLIESK</sequence>
<reference key="1">
    <citation type="submission" date="2007-08" db="EMBL/GenBank/DDBJ databases">
        <authorList>
            <consortium name="The Vibrio harveyi Genome Sequencing Project"/>
            <person name="Bassler B."/>
            <person name="Clifton S.W."/>
            <person name="Fulton L."/>
            <person name="Delehaunty K."/>
            <person name="Fronick C."/>
            <person name="Harrison M."/>
            <person name="Markivic C."/>
            <person name="Fulton R."/>
            <person name="Tin-Wollam A.-M."/>
            <person name="Shah N."/>
            <person name="Pepin K."/>
            <person name="Nash W."/>
            <person name="Thiruvilangam P."/>
            <person name="Bhonagiri V."/>
            <person name="Waters C."/>
            <person name="Tu K.C."/>
            <person name="Irgon J."/>
            <person name="Wilson R.K."/>
        </authorList>
    </citation>
    <scope>NUCLEOTIDE SEQUENCE [LARGE SCALE GENOMIC DNA]</scope>
    <source>
        <strain>ATCC BAA-1116 / BB120</strain>
    </source>
</reference>
<keyword id="KW-0963">Cytoplasm</keyword>
<keyword id="KW-0489">Methyltransferase</keyword>
<keyword id="KW-0949">S-adenosyl-L-methionine</keyword>
<keyword id="KW-0808">Transferase</keyword>